<reference key="1">
    <citation type="journal article" date="2004" name="Nucleic Acids Res.">
        <title>Thermoadaptation trait revealed by the genome sequence of thermophilic Geobacillus kaustophilus.</title>
        <authorList>
            <person name="Takami H."/>
            <person name="Takaki Y."/>
            <person name="Chee G.-J."/>
            <person name="Nishi S."/>
            <person name="Shimamura S."/>
            <person name="Suzuki H."/>
            <person name="Matsui S."/>
            <person name="Uchiyama I."/>
        </authorList>
    </citation>
    <scope>NUCLEOTIDE SEQUENCE [LARGE SCALE GENOMIC DNA]</scope>
    <source>
        <strain>HTA426</strain>
    </source>
</reference>
<name>SYG_GEOKA</name>
<dbReference type="EC" id="6.1.1.14" evidence="1"/>
<dbReference type="EMBL" id="BA000043">
    <property type="protein sequence ID" value="BAD77715.1"/>
    <property type="molecule type" value="Genomic_DNA"/>
</dbReference>
<dbReference type="RefSeq" id="WP_011232897.1">
    <property type="nucleotide sequence ID" value="NC_006510.1"/>
</dbReference>
<dbReference type="SMR" id="Q5KUC1"/>
<dbReference type="STRING" id="235909.GK3430"/>
<dbReference type="KEGG" id="gka:GK3430"/>
<dbReference type="eggNOG" id="COG0423">
    <property type="taxonomic scope" value="Bacteria"/>
</dbReference>
<dbReference type="HOGENOM" id="CLU_015515_2_1_9"/>
<dbReference type="Proteomes" id="UP000001172">
    <property type="component" value="Chromosome"/>
</dbReference>
<dbReference type="GO" id="GO:0005737">
    <property type="term" value="C:cytoplasm"/>
    <property type="evidence" value="ECO:0007669"/>
    <property type="project" value="UniProtKB-SubCell"/>
</dbReference>
<dbReference type="GO" id="GO:0005524">
    <property type="term" value="F:ATP binding"/>
    <property type="evidence" value="ECO:0007669"/>
    <property type="project" value="UniProtKB-UniRule"/>
</dbReference>
<dbReference type="GO" id="GO:0140096">
    <property type="term" value="F:catalytic activity, acting on a protein"/>
    <property type="evidence" value="ECO:0007669"/>
    <property type="project" value="UniProtKB-ARBA"/>
</dbReference>
<dbReference type="GO" id="GO:0004820">
    <property type="term" value="F:glycine-tRNA ligase activity"/>
    <property type="evidence" value="ECO:0000250"/>
    <property type="project" value="UniProtKB"/>
</dbReference>
<dbReference type="GO" id="GO:0046983">
    <property type="term" value="F:protein dimerization activity"/>
    <property type="evidence" value="ECO:0000250"/>
    <property type="project" value="UniProtKB"/>
</dbReference>
<dbReference type="GO" id="GO:0016740">
    <property type="term" value="F:transferase activity"/>
    <property type="evidence" value="ECO:0007669"/>
    <property type="project" value="UniProtKB-ARBA"/>
</dbReference>
<dbReference type="GO" id="GO:0006426">
    <property type="term" value="P:glycyl-tRNA aminoacylation"/>
    <property type="evidence" value="ECO:0007669"/>
    <property type="project" value="UniProtKB-UniRule"/>
</dbReference>
<dbReference type="CDD" id="cd00774">
    <property type="entry name" value="GlyRS-like_core"/>
    <property type="match status" value="1"/>
</dbReference>
<dbReference type="CDD" id="cd00858">
    <property type="entry name" value="GlyRS_anticodon"/>
    <property type="match status" value="1"/>
</dbReference>
<dbReference type="FunFam" id="3.40.50.800:FF:000002">
    <property type="entry name" value="Glycine--tRNA ligase"/>
    <property type="match status" value="1"/>
</dbReference>
<dbReference type="Gene3D" id="3.30.40.230">
    <property type="match status" value="1"/>
</dbReference>
<dbReference type="Gene3D" id="3.40.50.800">
    <property type="entry name" value="Anticodon-binding domain"/>
    <property type="match status" value="1"/>
</dbReference>
<dbReference type="Gene3D" id="3.30.930.10">
    <property type="entry name" value="Bira Bifunctional Protein, Domain 2"/>
    <property type="match status" value="1"/>
</dbReference>
<dbReference type="HAMAP" id="MF_00253_B">
    <property type="entry name" value="Gly_tRNA_synth_B"/>
    <property type="match status" value="1"/>
</dbReference>
<dbReference type="InterPro" id="IPR002314">
    <property type="entry name" value="aa-tRNA-synt_IIb"/>
</dbReference>
<dbReference type="InterPro" id="IPR006195">
    <property type="entry name" value="aa-tRNA-synth_II"/>
</dbReference>
<dbReference type="InterPro" id="IPR045864">
    <property type="entry name" value="aa-tRNA-synth_II/BPL/LPL"/>
</dbReference>
<dbReference type="InterPro" id="IPR004154">
    <property type="entry name" value="Anticodon-bd"/>
</dbReference>
<dbReference type="InterPro" id="IPR036621">
    <property type="entry name" value="Anticodon-bd_dom_sf"/>
</dbReference>
<dbReference type="InterPro" id="IPR027031">
    <property type="entry name" value="Gly-tRNA_synthase/POLG2"/>
</dbReference>
<dbReference type="InterPro" id="IPR022961">
    <property type="entry name" value="Gly_tRNA_ligase_bac"/>
</dbReference>
<dbReference type="InterPro" id="IPR033731">
    <property type="entry name" value="GlyRS-like_core"/>
</dbReference>
<dbReference type="InterPro" id="IPR002315">
    <property type="entry name" value="tRNA-synt_gly"/>
</dbReference>
<dbReference type="NCBIfam" id="TIGR00389">
    <property type="entry name" value="glyS_dimeric"/>
    <property type="match status" value="1"/>
</dbReference>
<dbReference type="NCBIfam" id="NF003211">
    <property type="entry name" value="PRK04173.1"/>
    <property type="match status" value="1"/>
</dbReference>
<dbReference type="PANTHER" id="PTHR10745:SF8">
    <property type="entry name" value="DNA POLYMERASE SUBUNIT GAMMA-2, MITOCHONDRIAL"/>
    <property type="match status" value="1"/>
</dbReference>
<dbReference type="PANTHER" id="PTHR10745">
    <property type="entry name" value="GLYCYL-TRNA SYNTHETASE/DNA POLYMERASE SUBUNIT GAMMA-2"/>
    <property type="match status" value="1"/>
</dbReference>
<dbReference type="Pfam" id="PF03129">
    <property type="entry name" value="HGTP_anticodon"/>
    <property type="match status" value="1"/>
</dbReference>
<dbReference type="Pfam" id="PF00587">
    <property type="entry name" value="tRNA-synt_2b"/>
    <property type="match status" value="1"/>
</dbReference>
<dbReference type="PRINTS" id="PR01043">
    <property type="entry name" value="TRNASYNTHGLY"/>
</dbReference>
<dbReference type="SUPFAM" id="SSF52954">
    <property type="entry name" value="Class II aaRS ABD-related"/>
    <property type="match status" value="1"/>
</dbReference>
<dbReference type="SUPFAM" id="SSF55681">
    <property type="entry name" value="Class II aaRS and biotin synthetases"/>
    <property type="match status" value="1"/>
</dbReference>
<dbReference type="PROSITE" id="PS50862">
    <property type="entry name" value="AA_TRNA_LIGASE_II"/>
    <property type="match status" value="1"/>
</dbReference>
<evidence type="ECO:0000255" key="1">
    <source>
        <dbReference type="HAMAP-Rule" id="MF_00253"/>
    </source>
</evidence>
<protein>
    <recommendedName>
        <fullName evidence="1">Glycine--tRNA ligase</fullName>
        <ecNumber evidence="1">6.1.1.14</ecNumber>
    </recommendedName>
    <alternativeName>
        <fullName evidence="1">Glycyl-tRNA synthetase</fullName>
        <shortName evidence="1">GlyRS</shortName>
    </alternativeName>
</protein>
<organism>
    <name type="scientific">Geobacillus kaustophilus (strain HTA426)</name>
    <dbReference type="NCBI Taxonomy" id="235909"/>
    <lineage>
        <taxon>Bacteria</taxon>
        <taxon>Bacillati</taxon>
        <taxon>Bacillota</taxon>
        <taxon>Bacilli</taxon>
        <taxon>Bacillales</taxon>
        <taxon>Anoxybacillaceae</taxon>
        <taxon>Geobacillus</taxon>
        <taxon>Geobacillus thermoleovorans group</taxon>
    </lineage>
</organism>
<sequence>MAVTMEEIVAHAKHRGFVFPGSEIYGGLANTWDYGPLGVELKNNIKRAWWKKFVQESPYNVGLDAAILMNPRTWEASGHLGNFNDPMVDCKQCKARHRADKLIEKALEEKGIEMIVDGLPLAKMDELIKEYDIACPECGSRDFTNVRQFNLMFKTYQGVTESSANEIYLRPETAQGIFVNFKNVQRTMRKKLPFGIAQIGKSFRNEITPGNFTFRTREFEQMELEFFCKPGEELQWFDYWKQFCKDWLLSLGMKEDNIRLRDHAKEELSHYSNATTDIEYHFPFGWGELWGIASRTDYDLKRHMEYSGEDFHYLDQETNERYIPYCIEPSLGADRVTLAFMIDAYDEEELEDGTTRTVMHLHPALAPYKAAVLPLSKKLADGAHRIYEELVKHFMVDYDETGSIGKRYRRQDEIGTPFCITYDFESEQDGQVTVRDRDTMEQVRLPIGELKAFLEEKIAF</sequence>
<proteinExistence type="inferred from homology"/>
<keyword id="KW-0030">Aminoacyl-tRNA synthetase</keyword>
<keyword id="KW-0067">ATP-binding</keyword>
<keyword id="KW-0963">Cytoplasm</keyword>
<keyword id="KW-0436">Ligase</keyword>
<keyword id="KW-0547">Nucleotide-binding</keyword>
<keyword id="KW-0648">Protein biosynthesis</keyword>
<keyword id="KW-1185">Reference proteome</keyword>
<comment type="function">
    <text evidence="1">Catalyzes the attachment of glycine to tRNA(Gly).</text>
</comment>
<comment type="catalytic activity">
    <reaction evidence="1">
        <text>tRNA(Gly) + glycine + ATP = glycyl-tRNA(Gly) + AMP + diphosphate</text>
        <dbReference type="Rhea" id="RHEA:16013"/>
        <dbReference type="Rhea" id="RHEA-COMP:9664"/>
        <dbReference type="Rhea" id="RHEA-COMP:9683"/>
        <dbReference type="ChEBI" id="CHEBI:30616"/>
        <dbReference type="ChEBI" id="CHEBI:33019"/>
        <dbReference type="ChEBI" id="CHEBI:57305"/>
        <dbReference type="ChEBI" id="CHEBI:78442"/>
        <dbReference type="ChEBI" id="CHEBI:78522"/>
        <dbReference type="ChEBI" id="CHEBI:456215"/>
        <dbReference type="EC" id="6.1.1.14"/>
    </reaction>
</comment>
<comment type="subunit">
    <text evidence="1">Homodimer.</text>
</comment>
<comment type="subcellular location">
    <subcellularLocation>
        <location evidence="1">Cytoplasm</location>
    </subcellularLocation>
</comment>
<comment type="similarity">
    <text evidence="1">Belongs to the class-II aminoacyl-tRNA synthetase family.</text>
</comment>
<accession>Q5KUC1</accession>
<feature type="chain" id="PRO_1000047373" description="Glycine--tRNA ligase">
    <location>
        <begin position="1"/>
        <end position="460"/>
    </location>
</feature>
<feature type="binding site" evidence="1">
    <location>
        <position position="98"/>
    </location>
    <ligand>
        <name>substrate</name>
    </ligand>
</feature>
<feature type="binding site" evidence="1">
    <location>
        <position position="172"/>
    </location>
    <ligand>
        <name>substrate</name>
    </ligand>
</feature>
<feature type="binding site" evidence="1">
    <location>
        <begin position="204"/>
        <end position="206"/>
    </location>
    <ligand>
        <name>ATP</name>
        <dbReference type="ChEBI" id="CHEBI:30616"/>
    </ligand>
</feature>
<feature type="binding site" evidence="1">
    <location>
        <begin position="214"/>
        <end position="219"/>
    </location>
    <ligand>
        <name>ATP</name>
        <dbReference type="ChEBI" id="CHEBI:30616"/>
    </ligand>
</feature>
<feature type="binding site" evidence="1">
    <location>
        <begin position="219"/>
        <end position="223"/>
    </location>
    <ligand>
        <name>substrate</name>
    </ligand>
</feature>
<feature type="binding site" evidence="1">
    <location>
        <begin position="288"/>
        <end position="289"/>
    </location>
    <ligand>
        <name>ATP</name>
        <dbReference type="ChEBI" id="CHEBI:30616"/>
    </ligand>
</feature>
<feature type="binding site" evidence="1">
    <location>
        <begin position="328"/>
        <end position="332"/>
    </location>
    <ligand>
        <name>substrate</name>
    </ligand>
</feature>
<feature type="binding site" evidence="1">
    <location>
        <begin position="332"/>
        <end position="335"/>
    </location>
    <ligand>
        <name>ATP</name>
        <dbReference type="ChEBI" id="CHEBI:30616"/>
    </ligand>
</feature>
<gene>
    <name evidence="1" type="primary">glyQS</name>
    <name type="ordered locus">GK3430</name>
</gene>